<protein>
    <recommendedName>
        <fullName>RANBP2-like and GRIP domain-containing protein 8</fullName>
    </recommendedName>
    <alternativeName>
        <fullName>Ran-binding protein 2-like 3</fullName>
        <shortName>RanBP2-like 3</shortName>
        <shortName>RanBP2L3</shortName>
    </alternativeName>
</protein>
<evidence type="ECO:0000255" key="1">
    <source>
        <dbReference type="PROSITE-ProRule" id="PRU00164"/>
    </source>
</evidence>
<evidence type="ECO:0000255" key="2">
    <source>
        <dbReference type="PROSITE-ProRule" id="PRU00250"/>
    </source>
</evidence>
<evidence type="ECO:0000256" key="3">
    <source>
        <dbReference type="SAM" id="MobiDB-lite"/>
    </source>
</evidence>
<evidence type="ECO:0000269" key="4">
    <source>
    </source>
</evidence>
<evidence type="ECO:0000305" key="5"/>
<evidence type="ECO:0007744" key="6">
    <source>
    </source>
</evidence>
<evidence type="ECO:0007744" key="7">
    <source>
    </source>
</evidence>
<feature type="chain" id="PRO_0000204917" description="RANBP2-like and GRIP domain-containing protein 8">
    <location>
        <begin position="1"/>
        <end position="1765"/>
    </location>
</feature>
<feature type="repeat" description="TPR 1">
    <location>
        <begin position="26"/>
        <end position="59"/>
    </location>
</feature>
<feature type="repeat" description="TPR 2">
    <location>
        <begin position="60"/>
        <end position="93"/>
    </location>
</feature>
<feature type="repeat" description="TPR 3">
    <location>
        <begin position="648"/>
        <end position="681"/>
    </location>
</feature>
<feature type="domain" description="RanBD1 1" evidence="1">
    <location>
        <begin position="1036"/>
        <end position="1172"/>
    </location>
</feature>
<feature type="domain" description="RanBD1 2" evidence="1">
    <location>
        <begin position="1333"/>
        <end position="1469"/>
    </location>
</feature>
<feature type="domain" description="GRIP" evidence="2">
    <location>
        <begin position="1702"/>
        <end position="1752"/>
    </location>
</feature>
<feature type="region of interest" description="Disordered" evidence="3">
    <location>
        <begin position="760"/>
        <end position="804"/>
    </location>
</feature>
<feature type="region of interest" description="Disordered" evidence="3">
    <location>
        <begin position="1216"/>
        <end position="1247"/>
    </location>
</feature>
<feature type="region of interest" description="Disordered" evidence="3">
    <location>
        <begin position="1306"/>
        <end position="1330"/>
    </location>
</feature>
<feature type="region of interest" description="Disordered" evidence="3">
    <location>
        <begin position="1580"/>
        <end position="1621"/>
    </location>
</feature>
<feature type="region of interest" description="Disordered" evidence="3">
    <location>
        <begin position="1746"/>
        <end position="1765"/>
    </location>
</feature>
<feature type="compositionally biased region" description="Low complexity" evidence="3">
    <location>
        <begin position="778"/>
        <end position="797"/>
    </location>
</feature>
<feature type="compositionally biased region" description="Polar residues" evidence="3">
    <location>
        <begin position="1231"/>
        <end position="1244"/>
    </location>
</feature>
<feature type="compositionally biased region" description="Acidic residues" evidence="3">
    <location>
        <begin position="1317"/>
        <end position="1329"/>
    </location>
</feature>
<feature type="compositionally biased region" description="Polar residues" evidence="3">
    <location>
        <begin position="1580"/>
        <end position="1593"/>
    </location>
</feature>
<feature type="compositionally biased region" description="Basic and acidic residues" evidence="3">
    <location>
        <begin position="1594"/>
        <end position="1617"/>
    </location>
</feature>
<feature type="modified residue" description="Phosphothreonine" evidence="6">
    <location>
        <position position="19"/>
    </location>
</feature>
<feature type="modified residue" description="Phosphoserine" evidence="6 7">
    <location>
        <position position="21"/>
    </location>
</feature>
<feature type="sequence conflict" description="In Ref. 2; AAC05596." evidence="5" ref="2">
    <original>V</original>
    <variation>G</variation>
    <location>
        <position position="1541"/>
    </location>
</feature>
<feature type="sequence conflict" description="In Ref. 3; CAI56757." evidence="5" ref="3">
    <original>K</original>
    <variation>A</variation>
    <location>
        <position position="1640"/>
    </location>
</feature>
<feature type="sequence conflict" description="In Ref. 3; CAI56757." evidence="5" ref="3">
    <original>L</original>
    <variation>P</variation>
    <location>
        <position position="1741"/>
    </location>
</feature>
<feature type="sequence conflict" description="In Ref. 3; CAI56757." evidence="5" ref="3">
    <original>P</original>
    <variation>A</variation>
    <location>
        <position position="1760"/>
    </location>
</feature>
<name>RGPD8_HUMAN</name>
<comment type="subunit">
    <text evidence="4">Interacts with GTP-bound ARL1.</text>
</comment>
<comment type="miscellaneous">
    <text>One of the 8 copies of RANBP2 clustered close to the chromosome 2 centromere.</text>
</comment>
<proteinExistence type="evidence at protein level"/>
<dbReference type="EMBL" id="AF012086">
    <property type="protein sequence ID" value="AAC05596.1"/>
    <property type="molecule type" value="mRNA"/>
</dbReference>
<dbReference type="EMBL" id="CR936614">
    <property type="protein sequence ID" value="CAI56757.1"/>
    <property type="molecule type" value="mRNA"/>
</dbReference>
<dbReference type="CCDS" id="CCDS46394.1"/>
<dbReference type="RefSeq" id="NP_001157935.1">
    <property type="nucleotide sequence ID" value="NM_001164463.1"/>
</dbReference>
<dbReference type="SMR" id="O14715"/>
<dbReference type="BioGRID" id="608294">
    <property type="interactions" value="95"/>
</dbReference>
<dbReference type="FunCoup" id="O14715">
    <property type="interactions" value="601"/>
</dbReference>
<dbReference type="IntAct" id="O14715">
    <property type="interactions" value="60"/>
</dbReference>
<dbReference type="MINT" id="O14715"/>
<dbReference type="STRING" id="9606.ENSP00000306637"/>
<dbReference type="GlyCosmos" id="O14715">
    <property type="glycosylation" value="1 site, 1 glycan"/>
</dbReference>
<dbReference type="GlyGen" id="O14715">
    <property type="glycosylation" value="1 site, 1 O-linked glycan (1 site)"/>
</dbReference>
<dbReference type="iPTMnet" id="O14715"/>
<dbReference type="PhosphoSitePlus" id="O14715"/>
<dbReference type="BioMuta" id="RGPD8"/>
<dbReference type="jPOST" id="O14715"/>
<dbReference type="MassIVE" id="O14715"/>
<dbReference type="PaxDb" id="9606-ENSP00000306637"/>
<dbReference type="PeptideAtlas" id="O14715"/>
<dbReference type="ProteomicsDB" id="48174"/>
<dbReference type="Pumba" id="O14715"/>
<dbReference type="Antibodypedia" id="70727">
    <property type="antibodies" value="6 antibodies from 6 providers"/>
</dbReference>
<dbReference type="DNASU" id="727851"/>
<dbReference type="Ensembl" id="ENST00000302558.8">
    <property type="protein sequence ID" value="ENSP00000306637.3"/>
    <property type="gene ID" value="ENSG00000169629.12"/>
</dbReference>
<dbReference type="GeneID" id="727851"/>
<dbReference type="KEGG" id="hsa:727851"/>
<dbReference type="MANE-Select" id="ENST00000302558.8">
    <property type="protein sequence ID" value="ENSP00000306637.3"/>
    <property type="RefSeq nucleotide sequence ID" value="NM_001164463.1"/>
    <property type="RefSeq protein sequence ID" value="NP_001157935.1"/>
</dbReference>
<dbReference type="UCSC" id="uc002ths.3">
    <property type="organism name" value="human"/>
</dbReference>
<dbReference type="AGR" id="HGNC:9849"/>
<dbReference type="CTD" id="727851"/>
<dbReference type="GeneCards" id="RGPD8"/>
<dbReference type="HGNC" id="HGNC:9849">
    <property type="gene designation" value="RGPD8"/>
</dbReference>
<dbReference type="HPA" id="ENSG00000169629">
    <property type="expression patterns" value="Tissue enhanced (testis)"/>
</dbReference>
<dbReference type="MIM" id="602752">
    <property type="type" value="gene"/>
</dbReference>
<dbReference type="neXtProt" id="NX_O14715"/>
<dbReference type="OpenTargets" id="ENSG00000169629"/>
<dbReference type="PharmGKB" id="PA34210"/>
<dbReference type="VEuPathDB" id="HostDB:ENSG00000169629"/>
<dbReference type="eggNOG" id="KOG0864">
    <property type="taxonomic scope" value="Eukaryota"/>
</dbReference>
<dbReference type="GeneTree" id="ENSGT00940000164065"/>
<dbReference type="HOGENOM" id="CLU_004100_0_0_1"/>
<dbReference type="InParanoid" id="O14715"/>
<dbReference type="OMA" id="KISAYCK"/>
<dbReference type="OrthoDB" id="9523654at2759"/>
<dbReference type="PAN-GO" id="O14715">
    <property type="GO annotations" value="4 GO annotations based on evolutionary models"/>
</dbReference>
<dbReference type="PhylomeDB" id="O14715"/>
<dbReference type="TreeFam" id="TF314797"/>
<dbReference type="PathwayCommons" id="O14715"/>
<dbReference type="SignaLink" id="O14715"/>
<dbReference type="BioGRID-ORCS" id="727851">
    <property type="hits" value="20 hits in 262 CRISPR screens"/>
</dbReference>
<dbReference type="ChiTaRS" id="RGPD8">
    <property type="organism name" value="human"/>
</dbReference>
<dbReference type="GenomeRNAi" id="727851"/>
<dbReference type="Pharos" id="O14715">
    <property type="development level" value="Tdark"/>
</dbReference>
<dbReference type="PRO" id="PR:O14715"/>
<dbReference type="Proteomes" id="UP000005640">
    <property type="component" value="Chromosome 2"/>
</dbReference>
<dbReference type="RNAct" id="O14715">
    <property type="molecule type" value="protein"/>
</dbReference>
<dbReference type="Bgee" id="ENSG00000169629">
    <property type="expression patterns" value="Expressed in male germ line stem cell (sensu Vertebrata) in testis and 104 other cell types or tissues"/>
</dbReference>
<dbReference type="ExpressionAtlas" id="O14715">
    <property type="expression patterns" value="baseline and differential"/>
</dbReference>
<dbReference type="GO" id="GO:0005737">
    <property type="term" value="C:cytoplasm"/>
    <property type="evidence" value="ECO:0000318"/>
    <property type="project" value="GO_Central"/>
</dbReference>
<dbReference type="GO" id="GO:0005643">
    <property type="term" value="C:nuclear pore"/>
    <property type="evidence" value="ECO:0000318"/>
    <property type="project" value="GO_Central"/>
</dbReference>
<dbReference type="GO" id="GO:0031267">
    <property type="term" value="F:small GTPase binding"/>
    <property type="evidence" value="ECO:0000303"/>
    <property type="project" value="UniProtKB"/>
</dbReference>
<dbReference type="GO" id="GO:0006607">
    <property type="term" value="P:NLS-bearing protein import into nucleus"/>
    <property type="evidence" value="ECO:0000318"/>
    <property type="project" value="GO_Central"/>
</dbReference>
<dbReference type="CDD" id="cd13177">
    <property type="entry name" value="RanBD2_RanBP2-like"/>
    <property type="match status" value="1"/>
</dbReference>
<dbReference type="CDD" id="cd14685">
    <property type="entry name" value="RanBD3_RanBP2-like"/>
    <property type="match status" value="1"/>
</dbReference>
<dbReference type="FunFam" id="2.30.29.30:FF:000018">
    <property type="entry name" value="E3 SUMO-protein ligase RanBP2"/>
    <property type="match status" value="2"/>
</dbReference>
<dbReference type="FunFam" id="1.25.40.10:FF:000114">
    <property type="entry name" value="E3 SUMO-protein ligase RanBP2 isoform X1"/>
    <property type="match status" value="1"/>
</dbReference>
<dbReference type="FunFam" id="1.10.220.60:FF:000003">
    <property type="entry name" value="GRIP and coiled-coil domain-containing protein 2"/>
    <property type="match status" value="1"/>
</dbReference>
<dbReference type="Gene3D" id="1.10.220.60">
    <property type="entry name" value="GRIP domain"/>
    <property type="match status" value="1"/>
</dbReference>
<dbReference type="Gene3D" id="2.30.29.30">
    <property type="entry name" value="Pleckstrin-homology domain (PH domain)/Phosphotyrosine-binding domain (PTB)"/>
    <property type="match status" value="2"/>
</dbReference>
<dbReference type="Gene3D" id="1.25.40.10">
    <property type="entry name" value="Tetratricopeptide repeat domain"/>
    <property type="match status" value="1"/>
</dbReference>
<dbReference type="InterPro" id="IPR032023">
    <property type="entry name" value="GCC2_Rab_bind"/>
</dbReference>
<dbReference type="InterPro" id="IPR000237">
    <property type="entry name" value="GRIP_dom"/>
</dbReference>
<dbReference type="InterPro" id="IPR011993">
    <property type="entry name" value="PH-like_dom_sf"/>
</dbReference>
<dbReference type="InterPro" id="IPR000156">
    <property type="entry name" value="Ran_bind_dom"/>
</dbReference>
<dbReference type="InterPro" id="IPR045255">
    <property type="entry name" value="RanBP1-like"/>
</dbReference>
<dbReference type="InterPro" id="IPR011990">
    <property type="entry name" value="TPR-like_helical_dom_sf"/>
</dbReference>
<dbReference type="InterPro" id="IPR019734">
    <property type="entry name" value="TPR_rpt"/>
</dbReference>
<dbReference type="PANTHER" id="PTHR23138:SF175">
    <property type="entry name" value="E3 SUMO-PROTEIN LIGASE RANBP2-RELATED"/>
    <property type="match status" value="1"/>
</dbReference>
<dbReference type="PANTHER" id="PTHR23138">
    <property type="entry name" value="RAN BINDING PROTEIN"/>
    <property type="match status" value="1"/>
</dbReference>
<dbReference type="Pfam" id="PF01465">
    <property type="entry name" value="GRIP"/>
    <property type="match status" value="1"/>
</dbReference>
<dbReference type="Pfam" id="PF16704">
    <property type="entry name" value="Rab_bind"/>
    <property type="match status" value="1"/>
</dbReference>
<dbReference type="Pfam" id="PF00638">
    <property type="entry name" value="Ran_BP1"/>
    <property type="match status" value="2"/>
</dbReference>
<dbReference type="SMART" id="SM00755">
    <property type="entry name" value="Grip"/>
    <property type="match status" value="1"/>
</dbReference>
<dbReference type="SMART" id="SM00160">
    <property type="entry name" value="RanBD"/>
    <property type="match status" value="2"/>
</dbReference>
<dbReference type="SMART" id="SM00028">
    <property type="entry name" value="TPR"/>
    <property type="match status" value="1"/>
</dbReference>
<dbReference type="SUPFAM" id="SSF50729">
    <property type="entry name" value="PH domain-like"/>
    <property type="match status" value="2"/>
</dbReference>
<dbReference type="SUPFAM" id="SSF48452">
    <property type="entry name" value="TPR-like"/>
    <property type="match status" value="1"/>
</dbReference>
<dbReference type="PROSITE" id="PS50913">
    <property type="entry name" value="GRIP"/>
    <property type="match status" value="1"/>
</dbReference>
<dbReference type="PROSITE" id="PS50196">
    <property type="entry name" value="RANBD1"/>
    <property type="match status" value="2"/>
</dbReference>
<dbReference type="PROSITE" id="PS50005">
    <property type="entry name" value="TPR"/>
    <property type="match status" value="1"/>
</dbReference>
<dbReference type="PROSITE" id="PS50293">
    <property type="entry name" value="TPR_REGION"/>
    <property type="match status" value="1"/>
</dbReference>
<accession>O14715</accession>
<accession>Q5CZA8</accession>
<sequence length="1765" mass="198993">MRRSKADVERYVASVLGLTPSPRQKSMKGFYFAKLYYEAKEYDLAKKYICTYINVQERDPKAHRFLGLLYELEENTEKAVECYRRSVELNPTQKDLVLKIAELLCKNDVTDGRAKYWVERAAKLFPGSPAIYKLKEQLLDCEGEDGWNKLFDLIQSELYVRPDDVHVNIRLVELYRSTKRLKDAVAHCHEAERNIALRSSLEWNSCVVQTLKEYLESLQCLESDKSDWRATNTDLLLAYANLMLLTLSTRDVQENRELLESFDSALQSAKSSLGGNDELSATFLEMKGHFYMYAGSLLLKMGQHGNNVQWRALSELAALCYLIAFQVPRPKIKLREGKAGQNLLEMMACDRLSQSGHMLLSLSRGKQDFLKEVVETFANKIGQSALYDALFSSQSPKDTSFLGSDDIGKIDVQEPELEDLARYDVGAIRAHNGSLQHLTWLGLQWNSLPALPGIRKWLKQLFHRLPHETSRLETNAPESICILDLEVFLLGVVYTSHLQLKEKCNSHHSSYQPLCLPFPVCKQLCTERQKSWWDAVCTLIHRKAVPGNLAKLRLLVQHEINTLRAQEKHGLQPALLVHWAKYLQKTGSGLNSFYGQLEYIGRSVHYWKKVLPLLKIIKKNSIPEPIDPLFKHFHSVDIQASEIVEYEEDAHITFAILDAVNGNIEDAVTAFESIKSVVSYWNLALIFHRKAEDIENDALSPEEQEECRNYLTKTRDYLIKIIDDGDSNLSVVKKLPVPLESVKQMLNSVMQELEDYSEGGPLYKNGSLRNADSEIKHSTPSPTKYSLSPSKSYKYSPETPPRWTEDRNSLLNMICQQVEAIKKEMQELKLNSSKSASRHRWPTENYGPDSVPDGYQGSQTFHGAPLTVATTGPSVYYSQSPAYNSQYLLRPAANVTPTKGSSNTEFKSTKEGFSIPVSADGFKFGISEPGNQEKKREKPLENDTGLQAQDIRGRKKGRGVIFGQTSSTFTFADVAKSTSGEGFQFGKKDLNFKGFSGAGEKLFSSRYGKMANKANTSGDFEKDDDAYKTEDSDDIHFEPVVQMPEKVELVTGEEGEKVLYSQGVKLFRFDAEVRQWKERGLGNLKILKNEVNGKLRMLMRREQVLKVCANHWITTTMNLKPLSGSDRAWMWSASDFSDGDAKLERLAAKFKTPELAEEFKQKFEECQRLLLDIPLQTPHKLVDTGRAAKLIQRAEEMKSGLKDFKTFLTNDQTKVTEEENKGSGTGVAGASDTTIKPNAENTGPTLEWDNYDLREDALDDSVSSSSVHASPLASSPVRKNLFRFDESTTGSNFSFKSALSLSKSPAKLNQSGTSVGTDEESVVTQEEERDGQYFEPVVPLPDLVEVSSGEENEQVVFSHRAEIYRYDKDVGQWKERGIGDIKILQNYDNKQVRIVMRRDQVLKLCANHRITPDMSLQNMKGTERVWVWTACDFADGERKVEHLAVRFKLQDVADSFKKIFDEAKTAQEKDSLITPHVSRSSTPRESPCGKIAVAVLEEITRERTDVIQGDDVADAASEVEVSSTSETTTKAVVSPPKFVFVSESVKRIFSSEKSKPFAFGNSSATGSLFGFSFNAPLKSNNSETSSVAQSGSESKVEPKKCELSKNSDIEQSSDSKVKNLSASFPTEESSINYTFKTPEKEPPLWHAEFTKEELVQKLRSTTKSADHLNGLLREIEATNAVLMEQIKLLKSEIRRLERNQEREKSAANLEYLKNVLLQFIFLKPGSERERLLPVINTMLQLSPEEKGKLAAVAQDEEENPSRSSG</sequence>
<keyword id="KW-0597">Phosphoprotein</keyword>
<keyword id="KW-1267">Proteomics identification</keyword>
<keyword id="KW-1185">Reference proteome</keyword>
<keyword id="KW-0677">Repeat</keyword>
<keyword id="KW-0802">TPR repeat</keyword>
<organism>
    <name type="scientific">Homo sapiens</name>
    <name type="common">Human</name>
    <dbReference type="NCBI Taxonomy" id="9606"/>
    <lineage>
        <taxon>Eukaryota</taxon>
        <taxon>Metazoa</taxon>
        <taxon>Chordata</taxon>
        <taxon>Craniata</taxon>
        <taxon>Vertebrata</taxon>
        <taxon>Euteleostomi</taxon>
        <taxon>Mammalia</taxon>
        <taxon>Eutheria</taxon>
        <taxon>Euarchontoglires</taxon>
        <taxon>Primates</taxon>
        <taxon>Haplorrhini</taxon>
        <taxon>Catarrhini</taxon>
        <taxon>Hominidae</taxon>
        <taxon>Homo</taxon>
    </lineage>
</organism>
<reference key="1">
    <citation type="journal article" date="2005" name="Nature">
        <title>Generation and annotation of the DNA sequences of human chromosomes 2 and 4.</title>
        <authorList>
            <person name="Hillier L.W."/>
            <person name="Graves T.A."/>
            <person name="Fulton R.S."/>
            <person name="Fulton L.A."/>
            <person name="Pepin K.H."/>
            <person name="Minx P."/>
            <person name="Wagner-McPherson C."/>
            <person name="Layman D."/>
            <person name="Wylie K."/>
            <person name="Sekhon M."/>
            <person name="Becker M.C."/>
            <person name="Fewell G.A."/>
            <person name="Delehaunty K.D."/>
            <person name="Miner T.L."/>
            <person name="Nash W.E."/>
            <person name="Kremitzki C."/>
            <person name="Oddy L."/>
            <person name="Du H."/>
            <person name="Sun H."/>
            <person name="Bradshaw-Cordum H."/>
            <person name="Ali J."/>
            <person name="Carter J."/>
            <person name="Cordes M."/>
            <person name="Harris A."/>
            <person name="Isak A."/>
            <person name="van Brunt A."/>
            <person name="Nguyen C."/>
            <person name="Du F."/>
            <person name="Courtney L."/>
            <person name="Kalicki J."/>
            <person name="Ozersky P."/>
            <person name="Abbott S."/>
            <person name="Armstrong J."/>
            <person name="Belter E.A."/>
            <person name="Caruso L."/>
            <person name="Cedroni M."/>
            <person name="Cotton M."/>
            <person name="Davidson T."/>
            <person name="Desai A."/>
            <person name="Elliott G."/>
            <person name="Erb T."/>
            <person name="Fronick C."/>
            <person name="Gaige T."/>
            <person name="Haakenson W."/>
            <person name="Haglund K."/>
            <person name="Holmes A."/>
            <person name="Harkins R."/>
            <person name="Kim K."/>
            <person name="Kruchowski S.S."/>
            <person name="Strong C.M."/>
            <person name="Grewal N."/>
            <person name="Goyea E."/>
            <person name="Hou S."/>
            <person name="Levy A."/>
            <person name="Martinka S."/>
            <person name="Mead K."/>
            <person name="McLellan M.D."/>
            <person name="Meyer R."/>
            <person name="Randall-Maher J."/>
            <person name="Tomlinson C."/>
            <person name="Dauphin-Kohlberg S."/>
            <person name="Kozlowicz-Reilly A."/>
            <person name="Shah N."/>
            <person name="Swearengen-Shahid S."/>
            <person name="Snider J."/>
            <person name="Strong J.T."/>
            <person name="Thompson J."/>
            <person name="Yoakum M."/>
            <person name="Leonard S."/>
            <person name="Pearman C."/>
            <person name="Trani L."/>
            <person name="Radionenko M."/>
            <person name="Waligorski J.E."/>
            <person name="Wang C."/>
            <person name="Rock S.M."/>
            <person name="Tin-Wollam A.-M."/>
            <person name="Maupin R."/>
            <person name="Latreille P."/>
            <person name="Wendl M.C."/>
            <person name="Yang S.-P."/>
            <person name="Pohl C."/>
            <person name="Wallis J.W."/>
            <person name="Spieth J."/>
            <person name="Bieri T.A."/>
            <person name="Berkowicz N."/>
            <person name="Nelson J.O."/>
            <person name="Osborne J."/>
            <person name="Ding L."/>
            <person name="Meyer R."/>
            <person name="Sabo A."/>
            <person name="Shotland Y."/>
            <person name="Sinha P."/>
            <person name="Wohldmann P.E."/>
            <person name="Cook L.L."/>
            <person name="Hickenbotham M.T."/>
            <person name="Eldred J."/>
            <person name="Williams D."/>
            <person name="Jones T.A."/>
            <person name="She X."/>
            <person name="Ciccarelli F.D."/>
            <person name="Izaurralde E."/>
            <person name="Taylor J."/>
            <person name="Schmutz J."/>
            <person name="Myers R.M."/>
            <person name="Cox D.R."/>
            <person name="Huang X."/>
            <person name="McPherson J.D."/>
            <person name="Mardis E.R."/>
            <person name="Clifton S.W."/>
            <person name="Warren W.C."/>
            <person name="Chinwalla A.T."/>
            <person name="Eddy S.R."/>
            <person name="Marra M.A."/>
            <person name="Ovcharenko I."/>
            <person name="Furey T.S."/>
            <person name="Miller W."/>
            <person name="Eichler E.E."/>
            <person name="Bork P."/>
            <person name="Suyama M."/>
            <person name="Torrents D."/>
            <person name="Waterston R.H."/>
            <person name="Wilson R.K."/>
        </authorList>
    </citation>
    <scope>NUCLEOTIDE SEQUENCE [LARGE SCALE GENOMIC DNA]</scope>
</reference>
<reference key="2">
    <citation type="journal article" date="1998" name="Genomics">
        <title>Identification of a novel Ran binding protein 2 related gene (RANBP2L1) and detection of a gene cluster on human chromosome 2q11-q12.</title>
        <authorList>
            <person name="Nothwang H.G."/>
            <person name="Rensing C."/>
            <person name="Kubler M."/>
            <person name="Denich D."/>
            <person name="Brandl B."/>
            <person name="Stubanus M."/>
            <person name="Haaf T."/>
            <person name="Kurnit D."/>
            <person name="Hildebrandt F."/>
        </authorList>
    </citation>
    <scope>NUCLEOTIDE SEQUENCE [MRNA] OF 1011-1765</scope>
</reference>
<reference key="3">
    <citation type="journal article" date="2007" name="BMC Genomics">
        <title>The full-ORF clone resource of the German cDNA consortium.</title>
        <authorList>
            <person name="Bechtel S."/>
            <person name="Rosenfelder H."/>
            <person name="Duda A."/>
            <person name="Schmidt C.P."/>
            <person name="Ernst U."/>
            <person name="Wellenreuther R."/>
            <person name="Mehrle A."/>
            <person name="Schuster C."/>
            <person name="Bahr A."/>
            <person name="Bloecker H."/>
            <person name="Heubner D."/>
            <person name="Hoerlein A."/>
            <person name="Michel G."/>
            <person name="Wedler H."/>
            <person name="Koehrer K."/>
            <person name="Ottenwaelder B."/>
            <person name="Poustka A."/>
            <person name="Wiemann S."/>
            <person name="Schupp I."/>
        </authorList>
    </citation>
    <scope>NUCLEOTIDE SEQUENCE [LARGE SCALE MRNA] OF 1640-1765</scope>
    <source>
        <tissue>Amygdala</tissue>
    </source>
</reference>
<reference key="4">
    <citation type="journal article" date="2001" name="J. Biol. Chem.">
        <title>ADP-ribosylation factors (ARFs) and ARF-like 1 (ARL1) have both specific and shared effectors: characterizing ARL1-binding proteins.</title>
        <authorList>
            <person name="Van Valkenburgh H."/>
            <person name="Shern J.F."/>
            <person name="Sharer J.D."/>
            <person name="Zhu X."/>
            <person name="Kahn R.A."/>
        </authorList>
    </citation>
    <scope>INTERACTION WITH ARL1</scope>
</reference>
<reference key="5">
    <citation type="journal article" date="2008" name="J. Proteome Res.">
        <title>Combining protein-based IMAC, peptide-based IMAC, and MudPIT for efficient phosphoproteomic analysis.</title>
        <authorList>
            <person name="Cantin G.T."/>
            <person name="Yi W."/>
            <person name="Lu B."/>
            <person name="Park S.K."/>
            <person name="Xu T."/>
            <person name="Lee J.-D."/>
            <person name="Yates J.R. III"/>
        </authorList>
    </citation>
    <scope>IDENTIFICATION BY MASS SPECTROMETRY [LARGE SCALE ANALYSIS]</scope>
    <source>
        <tissue>Cervix carcinoma</tissue>
    </source>
</reference>
<reference key="6">
    <citation type="journal article" date="2008" name="Mol. Cell">
        <title>Kinase-selective enrichment enables quantitative phosphoproteomics of the kinome across the cell cycle.</title>
        <authorList>
            <person name="Daub H."/>
            <person name="Olsen J.V."/>
            <person name="Bairlein M."/>
            <person name="Gnad F."/>
            <person name="Oppermann F.S."/>
            <person name="Korner R."/>
            <person name="Greff Z."/>
            <person name="Keri G."/>
            <person name="Stemmann O."/>
            <person name="Mann M."/>
        </authorList>
    </citation>
    <scope>IDENTIFICATION BY MASS SPECTROMETRY [LARGE SCALE ANALYSIS]</scope>
    <source>
        <tissue>Cervix carcinoma</tissue>
    </source>
</reference>
<reference key="7">
    <citation type="journal article" date="2008" name="Proc. Natl. Acad. Sci. U.S.A.">
        <title>A quantitative atlas of mitotic phosphorylation.</title>
        <authorList>
            <person name="Dephoure N."/>
            <person name="Zhou C."/>
            <person name="Villen J."/>
            <person name="Beausoleil S.A."/>
            <person name="Bakalarski C.E."/>
            <person name="Elledge S.J."/>
            <person name="Gygi S.P."/>
        </authorList>
    </citation>
    <scope>PHOSPHORYLATION [LARGE SCALE ANALYSIS] AT THR-19 AND SER-21</scope>
    <scope>IDENTIFICATION BY MASS SPECTROMETRY [LARGE SCALE ANALYSIS]</scope>
    <source>
        <tissue>Cervix carcinoma</tissue>
    </source>
</reference>
<reference key="8">
    <citation type="journal article" date="2013" name="J. Proteome Res.">
        <title>Toward a comprehensive characterization of a human cancer cell phosphoproteome.</title>
        <authorList>
            <person name="Zhou H."/>
            <person name="Di Palma S."/>
            <person name="Preisinger C."/>
            <person name="Peng M."/>
            <person name="Polat A.N."/>
            <person name="Heck A.J."/>
            <person name="Mohammed S."/>
        </authorList>
    </citation>
    <scope>PHOSPHORYLATION [LARGE SCALE ANALYSIS] AT SER-21</scope>
    <scope>IDENTIFICATION BY MASS SPECTROMETRY [LARGE SCALE ANALYSIS]</scope>
    <source>
        <tissue>Cervix carcinoma</tissue>
    </source>
</reference>
<gene>
    <name type="primary">RGPD8</name>
    <name type="synonym">RANBP2ALPHA</name>
    <name type="synonym">RANBP2L1</name>
    <name type="synonym">RANBP2L3</name>
</gene>